<gene>
    <name type="primary">AS</name>
    <name type="synonym">ac22</name>
    <name type="synonym">ag22</name>
</gene>
<name>TPSDV_ABIGR</name>
<reference key="1">
    <citation type="journal article" date="1996" name="J. Biol. Chem.">
        <title>Abietadiene synthase from grand fir (Abies grandis). cDNA isolation, characterization, and bacterial expression of a bifunctional diterpene cyclase involved in resin acid biosynthesis.</title>
        <authorList>
            <person name="Stoffer Vogel B."/>
            <person name="Wildung M.R."/>
            <person name="Vogel G."/>
            <person name="Croteau R.B."/>
        </authorList>
    </citation>
    <scope>NUCLEOTIDE SEQUENCE [MRNA]</scope>
    <scope>PROTEIN SEQUENCE OF 148-166; 522-530; 615-625 AND 699-705</scope>
    <scope>INDUCTION</scope>
    <source>
        <tissue>Stem</tissue>
    </source>
</reference>
<reference key="2">
    <citation type="journal article" date="2001" name="Genetics">
        <title>Genomic organization of plant terpene synthases and molecular evolutionary implications.</title>
        <authorList>
            <person name="Trapp S.C."/>
            <person name="Croteau R.B."/>
        </authorList>
    </citation>
    <scope>NUCLEOTIDE SEQUENCE [GENOMIC DNA] OF 16-868</scope>
    <scope>NOMENCLATURE</scope>
</reference>
<reference key="3">
    <citation type="journal article" date="1998" name="Proc. Natl. Acad. Sci. U.S.A.">
        <title>Plant terpenoid synthases: molecular biology and phylogenetic analysis.</title>
        <authorList>
            <person name="Bohlmann J."/>
            <person name="Meyer-Gauen G."/>
            <person name="Croteau R.B."/>
        </authorList>
    </citation>
    <scope>GENE FAMILY</scope>
    <scope>NOMENCLATURE</scope>
    <scope>FUNCTION</scope>
</reference>
<reference key="4">
    <citation type="journal article" date="2000" name="Biochemistry">
        <title>Abietadiene synthase from grand fir (Abies grandis): characterization and mechanism of action of the 'pseudomature' recombinant enzyme.</title>
        <authorList>
            <person name="Peters R.J."/>
            <person name="Flory J.E."/>
            <person name="Jetter R."/>
            <person name="Ravn M.M."/>
            <person name="Lee H.J."/>
            <person name="Coates R.M."/>
            <person name="Croteau R.B."/>
        </authorList>
    </citation>
    <scope>FUNCTION</scope>
    <scope>CATALYTIC ACTIVITY</scope>
    <scope>BIOPHYSICOCHEMICAL PROPERTIES</scope>
    <scope>ACTIVITY REGULATION</scope>
</reference>
<reference key="5">
    <citation type="journal article" date="2000" name="Org. Lett.">
        <title>Stereochemistry of the cyclization-rearrangement of (+)-copalyl diphosphate to (-)-abietadiene catalyzed by recombinant abietadiene synthase from Abies grandis.</title>
        <authorList>
            <person name="Ravn M.M."/>
            <person name="Coates R.M."/>
            <person name="Flory J.E."/>
            <person name="Peters R.J."/>
            <person name="Croteau R."/>
        </authorList>
    </citation>
    <scope>FUNCTION</scope>
    <scope>CATALYTIC ACTIVITY</scope>
</reference>
<reference key="6">
    <citation type="journal article" date="2001" name="J. Am. Chem. Soc.">
        <title>Bifunctional abietadiene synthase: free diffusive transfer of the (+)-copalyl diphosphate intermediate between two distinct active sites.</title>
        <authorList>
            <person name="Peters R.J."/>
            <person name="Ravn M.M."/>
            <person name="Coates R.M."/>
            <person name="Croteau R.B."/>
        </authorList>
    </citation>
    <scope>MUTAGENESIS OF ASP-404 AND ASP-621</scope>
    <scope>CHARACTERIZATION</scope>
</reference>
<reference key="7">
    <citation type="journal article" date="2002" name="Biochemistry">
        <title>Abietadiene synthase catalysis: conserved residues involved in protonation-initiated cyclization of geranylgeranyl diphosphate to (+)-copalyl diphosphate.</title>
        <authorList>
            <person name="Peters R.J."/>
            <person name="Croteau R.B."/>
        </authorList>
    </citation>
    <scope>FUNCTION</scope>
    <scope>BIOPHYSICOCHEMICAL PROPERTIES</scope>
    <scope>3D-STRUCTURE MODELING</scope>
    <scope>MUTAGENESIS OF TRP-358; ASP-361; ARG-365; ASP-402; ASP-404; ASP-405; ARG-411; ARG-454; GLU-499 AND TYR-520</scope>
</reference>
<reference key="8">
    <citation type="journal article" date="2002" name="Proc. Natl. Acad. Sci. U.S.A.">
        <title>Abietadiene synthase catalysis: mutational analysis of a prenyl diphosphate ionization-initiated cyclization and rearrangement.</title>
        <authorList>
            <person name="Peters R.J."/>
            <person name="Croteau R.B."/>
        </authorList>
    </citation>
    <scope>MUTAGENESIS OF ARG-584; ARG-586; GLU-589; THR-617; ASP-621; ASP-625; GLU-699; SER-721; ARG-762; ASN-765; ASP-766; THR-769; GLU-773; GLU-778; TYR-841; ASP-845 AND THR-848</scope>
    <scope>CHARACTERIZATION</scope>
</reference>
<reference key="9">
    <citation type="journal article" date="2003" name="Biochemistry">
        <title>Bifunctional abietadiene synthase: mutual structural dependence of the active sites for protonation-initiated and ionization-initiated cyclizations.</title>
        <authorList>
            <person name="Peters R.J."/>
            <person name="Carter O.A."/>
            <person name="Zhang Y."/>
            <person name="Matthews B.W."/>
            <person name="Croteau R.B."/>
        </authorList>
    </citation>
    <scope>FUNCTION</scope>
    <scope>MUTAGENESIS OF LYS-86 AND ARG-87</scope>
</reference>
<reference key="10">
    <citation type="journal article" date="2007" name="J. Am. Chem. Soc.">
        <title>A single residue switch converts abietadiene synthase into a pimaradiene specific cyclase.</title>
        <authorList>
            <person name="Wilderman P.R."/>
            <person name="Peters R.J."/>
        </authorList>
    </citation>
    <scope>FUNCTION</scope>
    <scope>MUTAGENESIS OF ALA-723</scope>
</reference>
<reference key="11">
    <citation type="journal article" date="2010" name="J. Biol. Chem.">
        <title>A single residue switch for Mg(2+)-dependent inhibition characterizes plant class II diterpene cyclases from primary and secondary metabolism.</title>
        <authorList>
            <person name="Mann F.M."/>
            <person name="Prisic S."/>
            <person name="Davenport E.K."/>
            <person name="Determan M.K."/>
            <person name="Coates R.M."/>
            <person name="Peters R.J."/>
        </authorList>
    </citation>
    <scope>FUNCTION</scope>
    <scope>MUTAGENESIS OF ARG-356 AND ASP-621</scope>
</reference>
<reference key="12">
    <citation type="journal article" date="2012" name="J. Biol. Chem.">
        <title>Insights into diterpene cyclization from structure of bifunctional abietadiene synthase from Abies grandis.</title>
        <authorList>
            <person name="Zhou K."/>
            <person name="Gao Y."/>
            <person name="Hoy J.A."/>
            <person name="Mann F.M."/>
            <person name="Honzatko R.B."/>
            <person name="Peters R.J."/>
        </authorList>
    </citation>
    <scope>X-RAY CRYSTALLOGRAPHY (2.30 ANGSTROMS) OF 85-868</scope>
    <scope>MUTAGENESIS OF ASN-451 AND VAL-727</scope>
</reference>
<proteinExistence type="evidence at protein level"/>
<evidence type="ECO:0000250" key="1"/>
<evidence type="ECO:0000250" key="2">
    <source>
        <dbReference type="UniProtKB" id="C7BKP9"/>
    </source>
</evidence>
<evidence type="ECO:0000250" key="3">
    <source>
        <dbReference type="UniProtKB" id="Q38802"/>
    </source>
</evidence>
<evidence type="ECO:0000250" key="4">
    <source>
        <dbReference type="UniProtKB" id="Q40577"/>
    </source>
</evidence>
<evidence type="ECO:0000255" key="5"/>
<evidence type="ECO:0000269" key="6">
    <source>
    </source>
</evidence>
<evidence type="ECO:0000269" key="7">
    <source>
    </source>
</evidence>
<evidence type="ECO:0000269" key="8">
    <source>
    </source>
</evidence>
<evidence type="ECO:0000269" key="9">
    <source>
    </source>
</evidence>
<evidence type="ECO:0000269" key="10">
    <source>
    </source>
</evidence>
<evidence type="ECO:0000269" key="11">
    <source>
    </source>
</evidence>
<evidence type="ECO:0000269" key="12">
    <source>
    </source>
</evidence>
<evidence type="ECO:0000269" key="13">
    <source>
    </source>
</evidence>
<evidence type="ECO:0000269" key="14">
    <source>
    </source>
</evidence>
<evidence type="ECO:0000269" key="15">
    <source>
    </source>
</evidence>
<evidence type="ECO:0000269" key="16">
    <source>
    </source>
</evidence>
<evidence type="ECO:0000305" key="17"/>
<evidence type="ECO:0007829" key="18">
    <source>
        <dbReference type="PDB" id="3S9V"/>
    </source>
</evidence>
<comment type="function">
    <text evidence="6 7 10 11 12 13 16">Involved in defensive oleoresin formation in conifers in response to insect attack or other injury. Involved in diterpene (C20) olefins biosynthesis. Bifunctional enzyme that catalyzes two sequential cyclizations of geranylgeranyl diphosphate (GGPP) to abietadiene. The copalyl diphosphate (CPP) intermediate diffuses freely between the 2 active sites in the enzyme. Changes in reaction pH, but not salt concentration, influence the relative proportion of the major products of the enzyme, abitadiene, levopimaradiene and neoabitadiene.</text>
</comment>
<comment type="catalytic activity">
    <reaction evidence="6 7">
        <text>(2E,6E,10E)-geranylgeranyl diphosphate = (+)-copalyl diphosphate</text>
        <dbReference type="Rhea" id="RHEA:24316"/>
        <dbReference type="ChEBI" id="CHEBI:58635"/>
        <dbReference type="ChEBI" id="CHEBI:58756"/>
        <dbReference type="EC" id="5.5.1.12"/>
    </reaction>
</comment>
<comment type="catalytic activity">
    <reaction evidence="6 7">
        <text>(+)-copalyl diphosphate = abieta-7,13-diene + diphosphate</text>
        <dbReference type="Rhea" id="RHEA:13873"/>
        <dbReference type="ChEBI" id="CHEBI:30232"/>
        <dbReference type="ChEBI" id="CHEBI:33019"/>
        <dbReference type="ChEBI" id="CHEBI:58635"/>
        <dbReference type="EC" id="4.2.3.18"/>
    </reaction>
</comment>
<comment type="catalytic activity">
    <reaction evidence="6 7">
        <text>(+)-copalyl diphosphate = neoabietadiene + diphosphate</text>
        <dbReference type="Rhea" id="RHEA:33987"/>
        <dbReference type="ChEBI" id="CHEBI:29651"/>
        <dbReference type="ChEBI" id="CHEBI:33019"/>
        <dbReference type="ChEBI" id="CHEBI:58635"/>
        <dbReference type="EC" id="4.2.3.132"/>
    </reaction>
</comment>
<comment type="cofactor">
    <cofactor evidence="4">
        <name>Mg(2+)</name>
        <dbReference type="ChEBI" id="CHEBI:18420"/>
    </cofactor>
    <text evidence="4">Binds 3 Mg(2+) ions per subunit.</text>
</comment>
<comment type="cofactor">
    <cofactor>
        <name>K(+)</name>
        <dbReference type="ChEBI" id="CHEBI:29103"/>
    </cofactor>
</comment>
<comment type="activity regulation">
    <text evidence="7">Not inhibited by 13-cyclopropylidene or 16-methylidenegeranylgeranyl diphosphate. The copalyl diphosphate synthase activity is not susceptible to magnesium-dependent inhibition.</text>
</comment>
<comment type="biophysicochemical properties">
    <kinetics>
        <KM evidence="7 10">3 uM for GGPP (in presence of magnesium)</KM>
        <KM evidence="7 10">20 uM for GGPP (in absence of magnesium)</KM>
        <KM evidence="7 10">0.4 uM for CPP (in presence of magnesium)</KM>
        <KM evidence="7 10">10 uM for CPP (in absence of magnesium)</KM>
    </kinetics>
    <phDependence>
        <text evidence="7 10">Optimum pH is 7.2 with GGPP as substrate and 8.7 with CPP as substrate.</text>
    </phDependence>
</comment>
<comment type="pathway">
    <text>Terpene metabolism; oleoresin biosynthesis.</text>
</comment>
<comment type="subunit">
    <text>Monomer.</text>
</comment>
<comment type="subcellular location">
    <subcellularLocation>
        <location evidence="1">Plastid</location>
        <location evidence="1">Chloroplast</location>
    </subcellularLocation>
</comment>
<comment type="induction">
    <text evidence="15">By wounding.</text>
</comment>
<comment type="domain">
    <text evidence="17">The Asp-Xaa-Asp-Asp (DXDD) motif is important for the catalytic activity in the class II active site relevant for the cyclization of GGPP. The Asp-Asp-Xaa-Xaa-Asp/Glu (DDXXD/E) motif is important for the catalytic activity in the class I active site, presumably through binding to Mg(2+).</text>
</comment>
<comment type="PTM">
    <text>The N-terminus is blocked.</text>
</comment>
<comment type="miscellaneous">
    <text>The abietadiene synthase activity exhibits an absolute dependence on a divalent metal ion cofactor while the copalyl diphosphate synthase activity is not completely dependent.</text>
</comment>
<comment type="similarity">
    <text evidence="17">Belongs to the terpene synthase family. Tpsd subfamily.</text>
</comment>
<protein>
    <recommendedName>
        <fullName>Bifunctional abietadiene synthase, chloroplastic</fullName>
    </recommendedName>
    <alternativeName>
        <fullName>(-)-abieta-7(8),13(14)-diene synthase</fullName>
    </alternativeName>
    <alternativeName>
        <fullName>Abietadiene cyclase</fullName>
        <shortName>AgAS</shortName>
    </alternativeName>
    <alternativeName>
        <fullName>Agggabi</fullName>
    </alternativeName>
    <domain>
        <recommendedName>
            <fullName>Abietadiene synthase</fullName>
            <ecNumber evidence="6 7">4.2.3.18</ecNumber>
        </recommendedName>
        <alternativeName>
            <fullName>Neoabietadiene synthase</fullName>
            <ecNumber evidence="6 7">4.2.3.132</ecNumber>
        </alternativeName>
    </domain>
    <domain>
        <recommendedName>
            <fullName>Copalyl diphosphate synthase</fullName>
            <ecNumber evidence="6 7">5.5.1.12</ecNumber>
        </recommendedName>
    </domain>
</protein>
<accession>Q38710</accession>
<accession>Q94FW1</accession>
<organism>
    <name type="scientific">Abies grandis</name>
    <name type="common">Grand fir</name>
    <name type="synonym">Pinus grandis</name>
    <dbReference type="NCBI Taxonomy" id="46611"/>
    <lineage>
        <taxon>Eukaryota</taxon>
        <taxon>Viridiplantae</taxon>
        <taxon>Streptophyta</taxon>
        <taxon>Embryophyta</taxon>
        <taxon>Tracheophyta</taxon>
        <taxon>Spermatophyta</taxon>
        <taxon>Pinopsida</taxon>
        <taxon>Pinidae</taxon>
        <taxon>Conifers I</taxon>
        <taxon>Pinales</taxon>
        <taxon>Pinaceae</taxon>
        <taxon>Abies</taxon>
    </lineage>
</organism>
<feature type="transit peptide" description="Chloroplast" evidence="5">
    <location>
        <begin position="1"/>
        <end position="70"/>
    </location>
</feature>
<feature type="chain" id="PRO_0000033634" description="Bifunctional abietadiene synthase, chloroplastic">
    <location>
        <begin position="71"/>
        <end position="868"/>
    </location>
</feature>
<feature type="short sequence motif" description="DXDD motif" evidence="17">
    <location>
        <begin position="402"/>
        <end position="405"/>
    </location>
</feature>
<feature type="short sequence motif" description="DDXXD motif" evidence="17">
    <location>
        <begin position="621"/>
        <end position="625"/>
    </location>
</feature>
<feature type="binding site" evidence="3">
    <location>
        <position position="269"/>
    </location>
    <ligand>
        <name>substrate</name>
    </ligand>
</feature>
<feature type="binding site" evidence="2">
    <location>
        <position position="402"/>
    </location>
    <ligand>
        <name>Mg(2+)</name>
        <dbReference type="ChEBI" id="CHEBI:18420"/>
        <label>4</label>
    </ligand>
</feature>
<feature type="binding site" evidence="2">
    <location>
        <position position="404"/>
    </location>
    <ligand>
        <name>Mg(2+)</name>
        <dbReference type="ChEBI" id="CHEBI:18420"/>
        <label>4</label>
    </ligand>
</feature>
<feature type="binding site" evidence="3">
    <location>
        <position position="489"/>
    </location>
    <ligand>
        <name>substrate</name>
    </ligand>
</feature>
<feature type="binding site" evidence="4">
    <location>
        <position position="621"/>
    </location>
    <ligand>
        <name>Mg(2+)</name>
        <dbReference type="ChEBI" id="CHEBI:18420"/>
        <label>1</label>
    </ligand>
</feature>
<feature type="binding site" evidence="4">
    <location>
        <position position="621"/>
    </location>
    <ligand>
        <name>Mg(2+)</name>
        <dbReference type="ChEBI" id="CHEBI:18420"/>
        <label>2</label>
    </ligand>
</feature>
<feature type="binding site" evidence="4">
    <location>
        <position position="625"/>
    </location>
    <ligand>
        <name>Mg(2+)</name>
        <dbReference type="ChEBI" id="CHEBI:18420"/>
        <label>1</label>
    </ligand>
</feature>
<feature type="binding site" evidence="4">
    <location>
        <position position="625"/>
    </location>
    <ligand>
        <name>Mg(2+)</name>
        <dbReference type="ChEBI" id="CHEBI:18420"/>
        <label>2</label>
    </ligand>
</feature>
<feature type="binding site" evidence="4">
    <location>
        <position position="765"/>
    </location>
    <ligand>
        <name>Mg(2+)</name>
        <dbReference type="ChEBI" id="CHEBI:18420"/>
        <label>3</label>
    </ligand>
</feature>
<feature type="binding site" evidence="4">
    <location>
        <position position="769"/>
    </location>
    <ligand>
        <name>Mg(2+)</name>
        <dbReference type="ChEBI" id="CHEBI:18420"/>
        <label>3</label>
    </ligand>
</feature>
<feature type="binding site" evidence="4">
    <location>
        <position position="773"/>
    </location>
    <ligand>
        <name>Mg(2+)</name>
        <dbReference type="ChEBI" id="CHEBI:18420"/>
        <label>3</label>
    </ligand>
</feature>
<feature type="mutagenesis site" description="No effect on CPP binding, but decreased abietadiene synthase activity; when associated with A-87." evidence="11">
    <original>K</original>
    <variation>A</variation>
    <location>
        <position position="86"/>
    </location>
</feature>
<feature type="mutagenesis site" description="No effect on CPP binding, but decreased abietadiene synthase activity; when associated with A-86." evidence="11">
    <original>R</original>
    <variation>A</variation>
    <location>
        <position position="87"/>
    </location>
</feature>
<feature type="mutagenesis site" description="No effect on abietadiene synthase activity, but strongly reduced copalyl diphosphate synthase activity." evidence="13">
    <original>R</original>
    <variation>A</variation>
    <location>
        <position position="356"/>
    </location>
</feature>
<feature type="mutagenesis site" description="Increased Mg(2+) inhibition; when associated with A-621." evidence="13">
    <original>R</original>
    <variation>H</variation>
    <location>
        <position position="356"/>
    </location>
</feature>
<feature type="mutagenesis site" description="Decreased copalyl diphosphate synthase activity." evidence="10">
    <original>W</original>
    <variation>A</variation>
    <location>
        <position position="358"/>
    </location>
</feature>
<feature type="mutagenesis site" description="No effect on GGPP binding, but decreased copalyl diphosphate synthase activity." evidence="10">
    <original>D</original>
    <variation>A</variation>
    <location>
        <position position="361"/>
    </location>
</feature>
<feature type="mutagenesis site" description="No effect on GGPP binding, but decreased copalyl diphosphate synthase activity." evidence="10">
    <original>R</original>
    <variation>A</variation>
    <location>
        <position position="365"/>
    </location>
</feature>
<feature type="mutagenesis site" description="No effect on GGPP binding, but decreased copalyl diphosphate synthase activity." evidence="10">
    <original>D</original>
    <variation>A</variation>
    <variation>E</variation>
    <variation>N</variation>
    <location>
        <position position="402"/>
    </location>
</feature>
<feature type="mutagenesis site" description="No effect on GGPP binding, but loss of copalyl diphosphate synthase activity." evidence="8 10">
    <original>D</original>
    <variation>A</variation>
    <variation>E</variation>
    <variation>N</variation>
    <location>
        <position position="404"/>
    </location>
</feature>
<feature type="mutagenesis site" description="No effect on GGPP binding, but decreased copalyl diphosphate synthase activity." evidence="10">
    <original>D</original>
    <variation>A</variation>
    <variation>E</variation>
    <variation>N</variation>
    <location>
        <position position="405"/>
    </location>
</feature>
<feature type="mutagenesis site" description="No effect on GGPP binding, but slightly decreased copalyl diphosphate synthase activity." evidence="10">
    <original>R</original>
    <variation>A</variation>
    <location>
        <position position="411"/>
    </location>
</feature>
<feature type="mutagenesis site" description="No effect on abietadiene synthase activity, but strongly reduced copalyl diphosphate synthase activity." evidence="14">
    <original>N</original>
    <variation>A</variation>
    <location>
        <position position="451"/>
    </location>
</feature>
<feature type="mutagenesis site" description="No effect on GGPP binding, but decreased copalyl diphosphate synthase activity." evidence="10">
    <original>R</original>
    <variation>A</variation>
    <location>
        <position position="454"/>
    </location>
</feature>
<feature type="mutagenesis site" description="No effect on GGPP binding, but decreased copalyl diphosphate synthase activity." evidence="10">
    <original>E</original>
    <variation>A</variation>
    <location>
        <position position="499"/>
    </location>
</feature>
<feature type="mutagenesis site" description="No effect on GGPP binding, but slightly decreased copalyl diphosphate synthase activity." evidence="10">
    <original>Y</original>
    <variation>A</variation>
    <location>
        <position position="520"/>
    </location>
</feature>
<feature type="mutagenesis site" description="No or small effect on substrate binding, but strongly decreases abietadiene synthase activity." evidence="9">
    <original>R</original>
    <variation>A</variation>
    <location>
        <position position="584"/>
    </location>
</feature>
<feature type="mutagenesis site" description="No or small effect on substrate binding, but strongly decreases abietadiene synthase activity." evidence="9">
    <original>R</original>
    <variation>A</variation>
    <location>
        <position position="586"/>
    </location>
</feature>
<feature type="mutagenesis site" description="Lower substrate binding and strong decrease of abietadiene synthase activity." evidence="9">
    <original>E</original>
    <variation>A</variation>
    <location>
        <position position="589"/>
    </location>
</feature>
<feature type="mutagenesis site" description="Increased production of abietadiene at the expense of levopimaradiene." evidence="9">
    <original>T</original>
    <variation>A</variation>
    <location>
        <position position="617"/>
    </location>
</feature>
<feature type="mutagenesis site" description="Loss of abietadiene synthase activity. Increased Mg(2+) inhibition; when associated with H-356." evidence="8 9 13">
    <original>D</original>
    <variation>A</variation>
    <location>
        <position position="621"/>
    </location>
</feature>
<feature type="mutagenesis site" description="No or small effect on substrate binding, but strongly decreases abietadiene synthase activity." evidence="9">
    <original>D</original>
    <variation>A</variation>
    <location>
        <position position="625"/>
    </location>
</feature>
<feature type="mutagenesis site" description="No or small effect on substrate binding, but strongly decreases abietadiene synthase activity." evidence="9">
    <original>E</original>
    <variation>A</variation>
    <location>
        <position position="699"/>
    </location>
</feature>
<feature type="mutagenesis site" description="Lower substrate binding and strong decrease of abietadiene synthase activity." evidence="9">
    <original>S</original>
    <variation>A</variation>
    <location>
        <position position="721"/>
    </location>
</feature>
<feature type="mutagenesis site" description="Produces pimaradienes instead of abietadienes." evidence="12">
    <original>A</original>
    <variation>S</variation>
    <location>
        <position position="723"/>
    </location>
</feature>
<feature type="mutagenesis site" description="No effect." evidence="14">
    <original>V</original>
    <variation>T</variation>
    <location>
        <position position="727"/>
    </location>
</feature>
<feature type="mutagenesis site" description="No or small effect on substrate binding, but strongly decreases abietadiene synthase activity." evidence="9">
    <original>R</original>
    <variation>A</variation>
    <location>
        <position position="762"/>
    </location>
</feature>
<feature type="mutagenesis site" description="Abolishes the conversion of CPP to abietadiene; produces only sandaracopimaradiene." evidence="9">
    <original>N</original>
    <variation>A</variation>
    <location>
        <position position="765"/>
    </location>
</feature>
<feature type="mutagenesis site" description="No or small effect on substrate binding, but strongly decreases abietadiene synthase activity." evidence="9">
    <original>D</original>
    <variation>A</variation>
    <location>
        <position position="766"/>
    </location>
</feature>
<feature type="mutagenesis site" description="Increased production of neoabietadiene at the expense of both levopimaradiene and abietadiene." evidence="9">
    <original>T</original>
    <variation>A</variation>
    <location>
        <position position="769"/>
    </location>
</feature>
<feature type="mutagenesis site" description="Increased production of neoabietadiene." evidence="9">
    <original>E</original>
    <variation>A</variation>
    <location>
        <position position="773"/>
    </location>
</feature>
<feature type="mutagenesis site" description="No or small effect on substrate binding, but strongly decreases abietadiene synthase activity." evidence="9">
    <original>E</original>
    <variation>A</variation>
    <location>
        <position position="778"/>
    </location>
</feature>
<feature type="mutagenesis site" description="No or small effect on substrate binding, but strongly decreases abietadiene synthase activity." evidence="9">
    <original>Y</original>
    <variation>F</variation>
    <location>
        <position position="841"/>
    </location>
</feature>
<feature type="mutagenesis site" description="No or small effect on substrate binding, but strongly decreases abietadiene synthase activity." evidence="9">
    <original>D</original>
    <variation>A</variation>
    <location>
        <position position="845"/>
    </location>
</feature>
<feature type="mutagenesis site" description="No or small effect on substrate binding, but strongly decreases abietadiene synthase activity." evidence="9">
    <original>T</original>
    <variation>A</variation>
    <location>
        <position position="848"/>
    </location>
</feature>
<feature type="sequence conflict" description="In Ref. 2; AAK83563." evidence="17" ref="2">
    <original>A</original>
    <variation>T</variation>
    <location>
        <position position="23"/>
    </location>
</feature>
<feature type="sequence conflict" description="In Ref. 2; AAK83563." evidence="17" ref="2">
    <original>F</original>
    <variation>S</variation>
    <location>
        <position position="214"/>
    </location>
</feature>
<feature type="sequence conflict" description="In Ref. 2; AAK83563." evidence="17" ref="2">
    <original>DWQ</original>
    <variation>EWE</variation>
    <location>
        <begin position="297"/>
        <end position="299"/>
    </location>
</feature>
<feature type="sequence conflict" description="In Ref. 2; AAK83563." evidence="17" ref="2">
    <original>V</original>
    <variation>L</variation>
    <location>
        <position position="557"/>
    </location>
</feature>
<feature type="sequence conflict" description="In Ref. 2; AAK83563." evidence="17" ref="2">
    <original>D</original>
    <variation>E</variation>
    <location>
        <position position="579"/>
    </location>
</feature>
<feature type="sequence conflict" description="In Ref. 2; AAK83563." evidence="17" ref="2">
    <original>Q</original>
    <variation>K</variation>
    <location>
        <position position="653"/>
    </location>
</feature>
<feature type="helix" evidence="18">
    <location>
        <begin position="112"/>
        <end position="129"/>
    </location>
</feature>
<feature type="helix" evidence="18">
    <location>
        <begin position="139"/>
        <end position="145"/>
    </location>
</feature>
<feature type="strand" evidence="18">
    <location>
        <begin position="155"/>
        <end position="159"/>
    </location>
</feature>
<feature type="helix" evidence="18">
    <location>
        <begin position="160"/>
        <end position="168"/>
    </location>
</feature>
<feature type="strand" evidence="18">
    <location>
        <begin position="179"/>
        <end position="181"/>
    </location>
</feature>
<feature type="helix" evidence="18">
    <location>
        <begin position="184"/>
        <end position="200"/>
    </location>
</feature>
<feature type="helix" evidence="18">
    <location>
        <begin position="205"/>
        <end position="219"/>
    </location>
</feature>
<feature type="helix" evidence="18">
    <location>
        <begin position="220"/>
        <end position="224"/>
    </location>
</feature>
<feature type="helix" evidence="18">
    <location>
        <begin position="234"/>
        <end position="247"/>
    </location>
</feature>
<feature type="helix" evidence="18">
    <location>
        <begin position="257"/>
        <end position="270"/>
    </location>
</feature>
<feature type="helix" evidence="18">
    <location>
        <begin position="275"/>
        <end position="280"/>
    </location>
</feature>
<feature type="helix" evidence="18">
    <location>
        <begin position="284"/>
        <end position="291"/>
    </location>
</feature>
<feature type="turn" evidence="18">
    <location>
        <begin position="293"/>
        <end position="295"/>
    </location>
</feature>
<feature type="helix" evidence="18">
    <location>
        <begin position="298"/>
        <end position="302"/>
    </location>
</feature>
<feature type="helix" evidence="18">
    <location>
        <begin position="315"/>
        <end position="325"/>
    </location>
</feature>
<feature type="helix" evidence="18">
    <location>
        <begin position="328"/>
        <end position="341"/>
    </location>
</feature>
<feature type="helix" evidence="18">
    <location>
        <begin position="352"/>
        <end position="365"/>
    </location>
</feature>
<feature type="helix" evidence="18">
    <location>
        <begin position="369"/>
        <end position="372"/>
    </location>
</feature>
<feature type="helix" evidence="18">
    <location>
        <begin position="373"/>
        <end position="384"/>
    </location>
</feature>
<feature type="helix" evidence="18">
    <location>
        <begin position="403"/>
        <end position="415"/>
    </location>
</feature>
<feature type="helix" evidence="18">
    <location>
        <begin position="422"/>
        <end position="428"/>
    </location>
</feature>
<feature type="helix" evidence="18">
    <location>
        <begin position="446"/>
        <end position="456"/>
    </location>
</feature>
<feature type="helix" evidence="18">
    <location>
        <begin position="464"/>
        <end position="480"/>
    </location>
</feature>
<feature type="turn" evidence="18">
    <location>
        <begin position="481"/>
        <end position="483"/>
    </location>
</feature>
<feature type="strand" evidence="18">
    <location>
        <begin position="492"/>
        <end position="494"/>
    </location>
</feature>
<feature type="helix" evidence="18">
    <location>
        <begin position="496"/>
        <end position="505"/>
    </location>
</feature>
<feature type="helix" evidence="18">
    <location>
        <begin position="508"/>
        <end position="510"/>
    </location>
</feature>
<feature type="helix" evidence="18">
    <location>
        <begin position="513"/>
        <end position="523"/>
    </location>
</feature>
<feature type="strand" evidence="18">
    <location>
        <begin position="530"/>
        <end position="536"/>
    </location>
</feature>
<feature type="turn" evidence="18">
    <location>
        <begin position="539"/>
        <end position="541"/>
    </location>
</feature>
<feature type="helix" evidence="18">
    <location>
        <begin position="544"/>
        <end position="574"/>
    </location>
</feature>
<feature type="turn" evidence="18">
    <location>
        <begin position="575"/>
        <end position="578"/>
    </location>
</feature>
<feature type="strand" evidence="18">
    <location>
        <begin position="581"/>
        <end position="583"/>
    </location>
</feature>
<feature type="helix" evidence="18">
    <location>
        <begin position="587"/>
        <end position="597"/>
    </location>
</feature>
<feature type="helix" evidence="18">
    <location>
        <begin position="601"/>
        <end position="603"/>
    </location>
</feature>
<feature type="helix" evidence="18">
    <location>
        <begin position="604"/>
        <end position="624"/>
    </location>
</feature>
<feature type="helix" evidence="18">
    <location>
        <begin position="630"/>
        <end position="642"/>
    </location>
</feature>
<feature type="strand" evidence="18">
    <location>
        <begin position="644"/>
        <end position="647"/>
    </location>
</feature>
<feature type="helix" evidence="18">
    <location>
        <begin position="648"/>
        <end position="650"/>
    </location>
</feature>
<feature type="helix" evidence="18">
    <location>
        <begin position="653"/>
        <end position="677"/>
    </location>
</feature>
<feature type="helix" evidence="18">
    <location>
        <begin position="682"/>
        <end position="704"/>
    </location>
</feature>
<feature type="helix" evidence="18">
    <location>
        <begin position="711"/>
        <end position="721"/>
    </location>
</feature>
<feature type="helix" evidence="18">
    <location>
        <begin position="724"/>
        <end position="731"/>
    </location>
</feature>
<feature type="strand" evidence="18">
    <location>
        <begin position="735"/>
        <end position="737"/>
    </location>
</feature>
<feature type="helix" evidence="18">
    <location>
        <begin position="741"/>
        <end position="744"/>
    </location>
</feature>
<feature type="turn" evidence="18">
    <location>
        <begin position="745"/>
        <end position="747"/>
    </location>
</feature>
<feature type="helix" evidence="18">
    <location>
        <begin position="752"/>
        <end position="776"/>
    </location>
</feature>
<feature type="helix" evidence="18">
    <location>
        <begin position="782"/>
        <end position="789"/>
    </location>
</feature>
<feature type="helix" evidence="18">
    <location>
        <begin position="795"/>
        <end position="819"/>
    </location>
</feature>
<feature type="helix" evidence="18">
    <location>
        <begin position="824"/>
        <end position="840"/>
    </location>
</feature>
<feature type="helix" evidence="18">
    <location>
        <begin position="851"/>
        <end position="863"/>
    </location>
</feature>
<dbReference type="EC" id="4.2.3.18" evidence="6 7"/>
<dbReference type="EC" id="4.2.3.132" evidence="6 7"/>
<dbReference type="EC" id="5.5.1.12" evidence="6 7"/>
<dbReference type="EMBL" id="U50768">
    <property type="protein sequence ID" value="AAB05407.1"/>
    <property type="molecule type" value="mRNA"/>
</dbReference>
<dbReference type="EMBL" id="AF326516">
    <property type="protein sequence ID" value="AAK83563.1"/>
    <property type="molecule type" value="Genomic_DNA"/>
</dbReference>
<dbReference type="PDB" id="3S9V">
    <property type="method" value="X-ray"/>
    <property type="resolution" value="2.30 A"/>
    <property type="chains" value="A/B/C/D=85-868"/>
</dbReference>
<dbReference type="PDBsum" id="3S9V"/>
<dbReference type="SMR" id="Q38710"/>
<dbReference type="KEGG" id="ag:AAB05407"/>
<dbReference type="BioCyc" id="MetaCyc:MONOMER-12822"/>
<dbReference type="BRENDA" id="4.2.3.132">
    <property type="organism ID" value="2"/>
</dbReference>
<dbReference type="BRENDA" id="4.2.3.18">
    <property type="organism ID" value="2"/>
</dbReference>
<dbReference type="UniPathway" id="UPA00924"/>
<dbReference type="EvolutionaryTrace" id="Q38710"/>
<dbReference type="GO" id="GO:0009507">
    <property type="term" value="C:chloroplast"/>
    <property type="evidence" value="ECO:0007669"/>
    <property type="project" value="UniProtKB-SubCell"/>
</dbReference>
<dbReference type="GO" id="GO:0050554">
    <property type="term" value="F:abietadiene synthase activity"/>
    <property type="evidence" value="ECO:0007669"/>
    <property type="project" value="UniProtKB-EC"/>
</dbReference>
<dbReference type="GO" id="GO:0050559">
    <property type="term" value="F:copalyl diphosphate synthase activity"/>
    <property type="evidence" value="ECO:0007669"/>
    <property type="project" value="UniProtKB-EC"/>
</dbReference>
<dbReference type="GO" id="GO:0000287">
    <property type="term" value="F:magnesium ion binding"/>
    <property type="evidence" value="ECO:0007669"/>
    <property type="project" value="InterPro"/>
</dbReference>
<dbReference type="GO" id="GO:0010333">
    <property type="term" value="F:terpene synthase activity"/>
    <property type="evidence" value="ECO:0007669"/>
    <property type="project" value="InterPro"/>
</dbReference>
<dbReference type="GO" id="GO:0016102">
    <property type="term" value="P:diterpenoid biosynthetic process"/>
    <property type="evidence" value="ECO:0007669"/>
    <property type="project" value="InterPro"/>
</dbReference>
<dbReference type="CDD" id="cd00684">
    <property type="entry name" value="Terpene_cyclase_plant_C1"/>
    <property type="match status" value="1"/>
</dbReference>
<dbReference type="FunFam" id="1.50.10.130:FF:000002">
    <property type="entry name" value="Ent-copalyl diphosphate synthase, chloroplastic"/>
    <property type="match status" value="1"/>
</dbReference>
<dbReference type="FunFam" id="1.10.600.10:FF:000005">
    <property type="entry name" value="Ent-kaur-16-ene synthase, chloroplastic"/>
    <property type="match status" value="1"/>
</dbReference>
<dbReference type="Gene3D" id="1.50.10.160">
    <property type="match status" value="1"/>
</dbReference>
<dbReference type="Gene3D" id="1.10.600.10">
    <property type="entry name" value="Farnesyl Diphosphate Synthase"/>
    <property type="match status" value="1"/>
</dbReference>
<dbReference type="Gene3D" id="1.50.10.130">
    <property type="entry name" value="Terpene synthase, N-terminal domain"/>
    <property type="match status" value="1"/>
</dbReference>
<dbReference type="InterPro" id="IPR008949">
    <property type="entry name" value="Isoprenoid_synthase_dom_sf"/>
</dbReference>
<dbReference type="InterPro" id="IPR044814">
    <property type="entry name" value="Terpene_cyclase_plant_C1"/>
</dbReference>
<dbReference type="InterPro" id="IPR001906">
    <property type="entry name" value="Terpene_synth_N"/>
</dbReference>
<dbReference type="InterPro" id="IPR036965">
    <property type="entry name" value="Terpene_synth_N_sf"/>
</dbReference>
<dbReference type="InterPro" id="IPR050148">
    <property type="entry name" value="Terpene_synthase-like"/>
</dbReference>
<dbReference type="InterPro" id="IPR005630">
    <property type="entry name" value="Terpene_synthase_metal-bd"/>
</dbReference>
<dbReference type="InterPro" id="IPR008930">
    <property type="entry name" value="Terpenoid_cyclase/PrenylTrfase"/>
</dbReference>
<dbReference type="PANTHER" id="PTHR31739">
    <property type="entry name" value="ENT-COPALYL DIPHOSPHATE SYNTHASE, CHLOROPLASTIC"/>
    <property type="match status" value="1"/>
</dbReference>
<dbReference type="PANTHER" id="PTHR31739:SF4">
    <property type="entry name" value="ENT-COPALYL DIPHOSPHATE SYNTHASE, CHLOROPLASTIC"/>
    <property type="match status" value="1"/>
</dbReference>
<dbReference type="Pfam" id="PF01397">
    <property type="entry name" value="Terpene_synth"/>
    <property type="match status" value="1"/>
</dbReference>
<dbReference type="Pfam" id="PF03936">
    <property type="entry name" value="Terpene_synth_C"/>
    <property type="match status" value="1"/>
</dbReference>
<dbReference type="SFLD" id="SFLDS00005">
    <property type="entry name" value="Isoprenoid_Synthase_Type_I"/>
    <property type="match status" value="1"/>
</dbReference>
<dbReference type="SFLD" id="SFLDG01604">
    <property type="entry name" value="Terpene_Cyclase_Like_1_C_Termi"/>
    <property type="match status" value="1"/>
</dbReference>
<dbReference type="SFLD" id="SFLDG01014">
    <property type="entry name" value="Terpene_Cyclase_Like_1_N-term"/>
    <property type="match status" value="1"/>
</dbReference>
<dbReference type="SFLD" id="SFLDG01605">
    <property type="entry name" value="Terpene_Cyclase_Like_1_N-term"/>
    <property type="match status" value="1"/>
</dbReference>
<dbReference type="SUPFAM" id="SSF48239">
    <property type="entry name" value="Terpenoid cyclases/Protein prenyltransferases"/>
    <property type="match status" value="2"/>
</dbReference>
<dbReference type="SUPFAM" id="SSF48576">
    <property type="entry name" value="Terpenoid synthases"/>
    <property type="match status" value="1"/>
</dbReference>
<sequence length="868" mass="99536">MAMPSSSLSSQIPTAAHHLTANAQSIPHFSTTLNAGSSASKRRSLYLRWGKGSNKIIACVGEGGATSVPYQSAEKNDSLSSSTLVKREFPPGFWKDDLIDSLTSSHKVAASDEKRIETLISEIKNMFRCMGYGETNPSAYDTAWVARIPAVDGSDNPHFPETVEWILQNQLKDGSWGEGFYFLAYDRILATLACIITLTLWRTGETQVQKGIEFFRTQAGKMEDEADSHRPSGFEIVFPAMLKEAKILGLDLPYDLPFLKQIIEKREAKLKRIPTDVLYALPTTLLYSLEGLQEIVDWQKIMKLQSKDGSFLSSPASTAAVFMRTGNKKCLDFLNFVLKKFGNHVPCHYPLDLFERLWAVDTVERLGIDRHFKEEIKEALDYVYSHWDERGIGWARENPVPDIDDTAMGLRILRLHGYNVSSDVLKTFRDENGEFFCFLGQTQRGVTDMLNVNRCSHVSFPGETIMEEAKLCTERYLRNALENVDAFDKWAFKKNIRGEVEYALKYPWHKSMPRLEARSYIENYGPDDVWLGKTVYMMPYISNEKYLELAKLDFNKVQSIHQTELQDLRRWWKSSGFTDLNFTRERVTEIYFSPASFIFEPEFSKCREVYTKTSNFTVILDDLYDAHGSLDDLKLFTESVKRWDLSLVDQMPQQMKICFVGFYNTFNDIAKEGRERQGRDVLGYIQNVWKVQLEAYTKEAEWSEAKYVPSFNEYIENASVSIALGTVVLISALFTGEVLTDEVLSKIDRESRFLQLMGLTGRLVNDTKTYQAERGQGEVASAIQCYMKDHPKISEEEALQHVYSVMENALEELNREFVNNKIPDIYKRLVFETARIMQLFYMQGDGLTLSHDMEIKEHVKNCLFQPVA</sequence>
<keyword id="KW-0002">3D-structure</keyword>
<keyword id="KW-0150">Chloroplast</keyword>
<keyword id="KW-0903">Direct protein sequencing</keyword>
<keyword id="KW-0413">Isomerase</keyword>
<keyword id="KW-0456">Lyase</keyword>
<keyword id="KW-0460">Magnesium</keyword>
<keyword id="KW-0464">Manganese</keyword>
<keyword id="KW-0479">Metal-binding</keyword>
<keyword id="KW-0511">Multifunctional enzyme</keyword>
<keyword id="KW-0934">Plastid</keyword>
<keyword id="KW-0809">Transit peptide</keyword>